<gene>
    <name type="ordered locus">GM21_3733</name>
</gene>
<comment type="similarity">
    <text evidence="1">Belongs to the CinA family.</text>
</comment>
<reference key="1">
    <citation type="submission" date="2009-07" db="EMBL/GenBank/DDBJ databases">
        <title>Complete sequence of Geobacter sp. M21.</title>
        <authorList>
            <consortium name="US DOE Joint Genome Institute"/>
            <person name="Lucas S."/>
            <person name="Copeland A."/>
            <person name="Lapidus A."/>
            <person name="Glavina del Rio T."/>
            <person name="Dalin E."/>
            <person name="Tice H."/>
            <person name="Bruce D."/>
            <person name="Goodwin L."/>
            <person name="Pitluck S."/>
            <person name="Saunders E."/>
            <person name="Brettin T."/>
            <person name="Detter J.C."/>
            <person name="Han C."/>
            <person name="Larimer F."/>
            <person name="Land M."/>
            <person name="Hauser L."/>
            <person name="Kyrpides N."/>
            <person name="Ovchinnikova G."/>
            <person name="Lovley D."/>
        </authorList>
    </citation>
    <scope>NUCLEOTIDE SEQUENCE [LARGE SCALE GENOMIC DNA]</scope>
    <source>
        <strain>M21</strain>
    </source>
</reference>
<name>CINAL_GEOSM</name>
<proteinExistence type="inferred from homology"/>
<accession>C6E6X4</accession>
<evidence type="ECO:0000255" key="1">
    <source>
        <dbReference type="HAMAP-Rule" id="MF_00226"/>
    </source>
</evidence>
<feature type="chain" id="PRO_1000204326" description="CinA-like protein">
    <location>
        <begin position="1"/>
        <end position="414"/>
    </location>
</feature>
<dbReference type="EMBL" id="CP001661">
    <property type="protein sequence ID" value="ACT19752.1"/>
    <property type="molecule type" value="Genomic_DNA"/>
</dbReference>
<dbReference type="SMR" id="C6E6X4"/>
<dbReference type="STRING" id="443144.GM21_3733"/>
<dbReference type="KEGG" id="gem:GM21_3733"/>
<dbReference type="eggNOG" id="COG1058">
    <property type="taxonomic scope" value="Bacteria"/>
</dbReference>
<dbReference type="eggNOG" id="COG1546">
    <property type="taxonomic scope" value="Bacteria"/>
</dbReference>
<dbReference type="HOGENOM" id="CLU_030805_9_2_7"/>
<dbReference type="OrthoDB" id="9801454at2"/>
<dbReference type="CDD" id="cd00885">
    <property type="entry name" value="cinA"/>
    <property type="match status" value="1"/>
</dbReference>
<dbReference type="Gene3D" id="3.30.70.2860">
    <property type="match status" value="1"/>
</dbReference>
<dbReference type="Gene3D" id="3.90.950.20">
    <property type="entry name" value="CinA-like"/>
    <property type="match status" value="1"/>
</dbReference>
<dbReference type="Gene3D" id="3.40.980.10">
    <property type="entry name" value="MoaB/Mog-like domain"/>
    <property type="match status" value="1"/>
</dbReference>
<dbReference type="HAMAP" id="MF_00226_B">
    <property type="entry name" value="CinA_B"/>
    <property type="match status" value="1"/>
</dbReference>
<dbReference type="InterPro" id="IPR050101">
    <property type="entry name" value="CinA"/>
</dbReference>
<dbReference type="InterPro" id="IPR036653">
    <property type="entry name" value="CinA-like_C"/>
</dbReference>
<dbReference type="InterPro" id="IPR008136">
    <property type="entry name" value="CinA_C"/>
</dbReference>
<dbReference type="InterPro" id="IPR041424">
    <property type="entry name" value="CinA_KH"/>
</dbReference>
<dbReference type="InterPro" id="IPR008135">
    <property type="entry name" value="Competence-induced_CinA"/>
</dbReference>
<dbReference type="InterPro" id="IPR036425">
    <property type="entry name" value="MoaB/Mog-like_dom_sf"/>
</dbReference>
<dbReference type="InterPro" id="IPR001453">
    <property type="entry name" value="MoaB/Mog_dom"/>
</dbReference>
<dbReference type="NCBIfam" id="TIGR00200">
    <property type="entry name" value="cinA_nterm"/>
    <property type="match status" value="1"/>
</dbReference>
<dbReference type="NCBIfam" id="TIGR00199">
    <property type="entry name" value="PncC_domain"/>
    <property type="match status" value="1"/>
</dbReference>
<dbReference type="NCBIfam" id="NF001813">
    <property type="entry name" value="PRK00549.1"/>
    <property type="match status" value="1"/>
</dbReference>
<dbReference type="PANTHER" id="PTHR13939">
    <property type="entry name" value="NICOTINAMIDE-NUCLEOTIDE AMIDOHYDROLASE PNCC"/>
    <property type="match status" value="1"/>
</dbReference>
<dbReference type="PANTHER" id="PTHR13939:SF0">
    <property type="entry name" value="NMN AMIDOHYDROLASE-LIKE PROTEIN YFAY"/>
    <property type="match status" value="1"/>
</dbReference>
<dbReference type="Pfam" id="PF02464">
    <property type="entry name" value="CinA"/>
    <property type="match status" value="1"/>
</dbReference>
<dbReference type="Pfam" id="PF18146">
    <property type="entry name" value="CinA_KH"/>
    <property type="match status" value="1"/>
</dbReference>
<dbReference type="Pfam" id="PF00994">
    <property type="entry name" value="MoCF_biosynth"/>
    <property type="match status" value="1"/>
</dbReference>
<dbReference type="PIRSF" id="PIRSF006728">
    <property type="entry name" value="CinA"/>
    <property type="match status" value="1"/>
</dbReference>
<dbReference type="SMART" id="SM00852">
    <property type="entry name" value="MoCF_biosynth"/>
    <property type="match status" value="1"/>
</dbReference>
<dbReference type="SUPFAM" id="SSF142433">
    <property type="entry name" value="CinA-like"/>
    <property type="match status" value="1"/>
</dbReference>
<dbReference type="SUPFAM" id="SSF53218">
    <property type="entry name" value="Molybdenum cofactor biosynthesis proteins"/>
    <property type="match status" value="1"/>
</dbReference>
<sequence length="414" mass="44249">MRVSVLSIGDELLCGEVVDTNASHIAGRLFQAGGRVERHLTVPDDAEAIVRALTELGARSEAVIVTGGLGPTPDDLTAEAAARAAGTELELSTEALTHLERFAQRITGELHPANRRQALLPSGCRLIPNPLGTALGFVVRIGCADCFFMPGVPFEMERMLEETVLPELRNRFPAGWQRVTLKLFGIAEAAIAELLEGAIPEGSRVQLAYCVKFPEIHLILRASATDAPALQQAAGELRRRLGAYLFAEDREEMDDRLALLLRESGLTLALAESCTGGMIAARITAVAGSSAYFLEGNVTYSNEAKTRMLQVPPPLIAEHGAVSAEVARAMAVGAREAAGSDLALSVTGIAGPDGGTLEKPVGTVYLALADQGSCRVERFNFQGDRDRVRCITCFTALNWLQSYLLTRKTTPGRG</sequence>
<organism>
    <name type="scientific">Geobacter sp. (strain M21)</name>
    <dbReference type="NCBI Taxonomy" id="443144"/>
    <lineage>
        <taxon>Bacteria</taxon>
        <taxon>Pseudomonadati</taxon>
        <taxon>Thermodesulfobacteriota</taxon>
        <taxon>Desulfuromonadia</taxon>
        <taxon>Geobacterales</taxon>
        <taxon>Geobacteraceae</taxon>
        <taxon>Geobacter</taxon>
    </lineage>
</organism>
<protein>
    <recommendedName>
        <fullName evidence="1">CinA-like protein</fullName>
    </recommendedName>
</protein>